<accession>P42762</accession>
<proteinExistence type="evidence at protein level"/>
<keyword id="KW-0067">ATP-binding</keyword>
<keyword id="KW-0143">Chaperone</keyword>
<keyword id="KW-0150">Chloroplast</keyword>
<keyword id="KW-0378">Hydrolase</keyword>
<keyword id="KW-0547">Nucleotide-binding</keyword>
<keyword id="KW-0934">Plastid</keyword>
<keyword id="KW-1185">Reference proteome</keyword>
<keyword id="KW-0677">Repeat</keyword>
<keyword id="KW-0346">Stress response</keyword>
<keyword id="KW-0809">Transit peptide</keyword>
<feature type="transit peptide" description="Chloroplast" evidence="2">
    <location>
        <begin position="1"/>
        <end position="89"/>
    </location>
</feature>
<feature type="chain" id="PRO_0000005505" description="Chaperone protein ClpD, chloroplastic">
    <location>
        <begin position="90"/>
        <end position="945"/>
    </location>
</feature>
<feature type="domain" description="Clp R" evidence="3">
    <location>
        <begin position="90"/>
        <end position="233"/>
    </location>
</feature>
<feature type="region of interest" description="Repeat 1" evidence="3">
    <location>
        <begin position="90"/>
        <end position="146"/>
    </location>
</feature>
<feature type="region of interest" description="Repeat 2" evidence="3">
    <location>
        <begin position="168"/>
        <end position="233"/>
    </location>
</feature>
<feature type="region of interest" description="Disordered" evidence="4">
    <location>
        <begin position="233"/>
        <end position="264"/>
    </location>
</feature>
<feature type="region of interest" description="I">
    <location>
        <begin position="271"/>
        <end position="523"/>
    </location>
</feature>
<feature type="region of interest" description="Disordered" evidence="4">
    <location>
        <begin position="555"/>
        <end position="586"/>
    </location>
</feature>
<feature type="region of interest" description="II">
    <location>
        <begin position="590"/>
        <end position="781"/>
    </location>
</feature>
<feature type="compositionally biased region" description="Low complexity" evidence="4">
    <location>
        <begin position="241"/>
        <end position="255"/>
    </location>
</feature>
<feature type="compositionally biased region" description="Acidic residues" evidence="4">
    <location>
        <begin position="562"/>
        <end position="574"/>
    </location>
</feature>
<feature type="binding site" evidence="1">
    <location>
        <begin position="316"/>
        <end position="323"/>
    </location>
    <ligand>
        <name>ATP</name>
        <dbReference type="ChEBI" id="CHEBI:30616"/>
    </ligand>
</feature>
<feature type="binding site" evidence="1">
    <location>
        <begin position="664"/>
        <end position="671"/>
    </location>
    <ligand>
        <name>ATP</name>
        <dbReference type="ChEBI" id="CHEBI:30616"/>
    </ligand>
</feature>
<sequence>MEVLSTSSPLTLHSHRLLSASSSSSHVTSIAASSLSSFASSYLGISLSNRTIHRFSTTPTNLRRFPQRKRKKFTPISAVFERFTERAIRAIIFSQKEAKSLGKDMVYTQHLLLGLIAEDRDPQGFLGSGITIDKAREAVWSIWDEANSDSKQEEASSTSYSKSTDMPFSISTKRVFEAAVEYSRTMDCQYIAPEHIAVGLFTVDDGSAGRVLKRLGANMNLLTAAALTRLKGEIAKDGREPSSSSKGSFESPPSGRIAGSGPGGKKAKNVLEQFCVDLTARASEGLIDPVIGREKEVQRVIQILCRRTKNNPILLGEAGVGKTAIAEGLAISIAEASAPGFLLTKRIMSLDIGLLMAGAKERGELEARVTALISEVKKSGKVILFIDEVHTLIGSGTVGRGNKGSGLDIANLLKPSLGRGELQCIASTTLDEFRSQFEKDKALARRFQPVLINEPSEEDAVKILLGLREKYEAHHNCKYTMEAIDAAVYLSSRYIADRFLPDKAIDLIDEAGSRARIEAFRKKKEDAICILSKPPNDYWQEIKTVQAMHEVVLSSRQKQDDGDAISDESGELVEESSLPPAAGDDEPILVGPDDIAAVASVWSGIPVQQITADERMLLMSLEDQLRGRVVGQDEAVAAISRAVKRSRVGLKDPDRPIAAMLFCGPTGVGKTELTKALAANYFGSEESMLRLDMSEYMERHTVSKLIGSPPGYVGFEEGGMLTEAIRRRPFTVVLFDEIEKAHPDIFNILLQLFEDGHLTDSQGRRVSFKNALIIMTSNVGSLAIAKGRHGSIGFILDDDEEAASYTGMKALVVEELKNYFRPELLNRIDEIVIFRQLEKAQMMEILNLMLQDLKSRLVALGVGLEVSEPVKELICKQGYDPAYGARPLRRTVTEIVEDPLSEAFLAGSFKPGDTAFVVLDDTGNPSVRTKPDSSTIRVTDKTSIA</sequence>
<evidence type="ECO:0000250" key="1"/>
<evidence type="ECO:0000255" key="2"/>
<evidence type="ECO:0000255" key="3">
    <source>
        <dbReference type="PROSITE-ProRule" id="PRU01251"/>
    </source>
</evidence>
<evidence type="ECO:0000256" key="4">
    <source>
        <dbReference type="SAM" id="MobiDB-lite"/>
    </source>
</evidence>
<evidence type="ECO:0000269" key="5">
    <source>
    </source>
</evidence>
<evidence type="ECO:0000269" key="6">
    <source>
    </source>
</evidence>
<evidence type="ECO:0000269" key="7">
    <source>
    </source>
</evidence>
<evidence type="ECO:0000269" key="8">
    <source>
    </source>
</evidence>
<evidence type="ECO:0000269" key="9">
    <source>
    </source>
</evidence>
<evidence type="ECO:0000269" key="10">
    <source>
    </source>
</evidence>
<evidence type="ECO:0000269" key="11">
    <source>
    </source>
</evidence>
<evidence type="ECO:0000269" key="12">
    <source>
    </source>
</evidence>
<evidence type="ECO:0000269" key="13">
    <source>
    </source>
</evidence>
<evidence type="ECO:0000303" key="14">
    <source>
    </source>
</evidence>
<evidence type="ECO:0000303" key="15">
    <source>
    </source>
</evidence>
<evidence type="ECO:0000303" key="16">
    <source ref="12"/>
</evidence>
<evidence type="ECO:0000305" key="17"/>
<evidence type="ECO:0000312" key="18">
    <source>
        <dbReference type="Araport" id="AT5G51070"/>
    </source>
</evidence>
<evidence type="ECO:0000312" key="19">
    <source>
        <dbReference type="EMBL" id="BAB10330.1"/>
    </source>
</evidence>
<dbReference type="EC" id="3.6.1.-" evidence="10"/>
<dbReference type="EMBL" id="D17582">
    <property type="protein sequence ID" value="BAA04506.1"/>
    <property type="molecule type" value="mRNA"/>
</dbReference>
<dbReference type="EMBL" id="AB023044">
    <property type="protein sequence ID" value="BAB10330.1"/>
    <property type="molecule type" value="Genomic_DNA"/>
</dbReference>
<dbReference type="EMBL" id="AB017063">
    <property type="protein sequence ID" value="BAB10330.1"/>
    <property type="status" value="JOINED"/>
    <property type="molecule type" value="Genomic_DNA"/>
</dbReference>
<dbReference type="EMBL" id="CP002688">
    <property type="protein sequence ID" value="AED96029.1"/>
    <property type="molecule type" value="Genomic_DNA"/>
</dbReference>
<dbReference type="EMBL" id="AY035112">
    <property type="protein sequence ID" value="AAK59617.1"/>
    <property type="molecule type" value="mRNA"/>
</dbReference>
<dbReference type="EMBL" id="AY133868">
    <property type="protein sequence ID" value="AAM91802.1"/>
    <property type="molecule type" value="mRNA"/>
</dbReference>
<dbReference type="PIR" id="JN0901">
    <property type="entry name" value="JN0901"/>
</dbReference>
<dbReference type="RefSeq" id="NP_568750.1">
    <property type="nucleotide sequence ID" value="NM_124486.3"/>
</dbReference>
<dbReference type="SMR" id="P42762"/>
<dbReference type="BioGRID" id="20425">
    <property type="interactions" value="1"/>
</dbReference>
<dbReference type="FunCoup" id="P42762">
    <property type="interactions" value="186"/>
</dbReference>
<dbReference type="IntAct" id="P42762">
    <property type="interactions" value="1"/>
</dbReference>
<dbReference type="STRING" id="3702.P42762"/>
<dbReference type="iPTMnet" id="P42762"/>
<dbReference type="PaxDb" id="3702-AT5G51070.1"/>
<dbReference type="ProteomicsDB" id="246773"/>
<dbReference type="EnsemblPlants" id="AT5G51070.1">
    <property type="protein sequence ID" value="AT5G51070.1"/>
    <property type="gene ID" value="AT5G51070"/>
</dbReference>
<dbReference type="GeneID" id="835180"/>
<dbReference type="Gramene" id="AT5G51070.1">
    <property type="protein sequence ID" value="AT5G51070.1"/>
    <property type="gene ID" value="AT5G51070"/>
</dbReference>
<dbReference type="KEGG" id="ath:AT5G51070"/>
<dbReference type="Araport" id="AT5G51070"/>
<dbReference type="TAIR" id="AT5G51070">
    <property type="gene designation" value="ERD1"/>
</dbReference>
<dbReference type="eggNOG" id="KOG1051">
    <property type="taxonomic scope" value="Eukaryota"/>
</dbReference>
<dbReference type="HOGENOM" id="CLU_005070_4_1_1"/>
<dbReference type="InParanoid" id="P42762"/>
<dbReference type="OMA" id="FMTEDTE"/>
<dbReference type="PhylomeDB" id="P42762"/>
<dbReference type="PRO" id="PR:P42762"/>
<dbReference type="Proteomes" id="UP000006548">
    <property type="component" value="Chromosome 5"/>
</dbReference>
<dbReference type="ExpressionAtlas" id="P42762">
    <property type="expression patterns" value="baseline and differential"/>
</dbReference>
<dbReference type="GO" id="GO:0009507">
    <property type="term" value="C:chloroplast"/>
    <property type="evidence" value="ECO:0007005"/>
    <property type="project" value="TAIR"/>
</dbReference>
<dbReference type="GO" id="GO:0009941">
    <property type="term" value="C:chloroplast envelope"/>
    <property type="evidence" value="ECO:0007005"/>
    <property type="project" value="TAIR"/>
</dbReference>
<dbReference type="GO" id="GO:0009570">
    <property type="term" value="C:chloroplast stroma"/>
    <property type="evidence" value="ECO:0007005"/>
    <property type="project" value="TAIR"/>
</dbReference>
<dbReference type="GO" id="GO:0009536">
    <property type="term" value="C:plastid"/>
    <property type="evidence" value="ECO:0007005"/>
    <property type="project" value="TAIR"/>
</dbReference>
<dbReference type="GO" id="GO:0005524">
    <property type="term" value="F:ATP binding"/>
    <property type="evidence" value="ECO:0007669"/>
    <property type="project" value="UniProtKB-KW"/>
</dbReference>
<dbReference type="GO" id="GO:0016887">
    <property type="term" value="F:ATP hydrolysis activity"/>
    <property type="evidence" value="ECO:0000314"/>
    <property type="project" value="TAIR"/>
</dbReference>
<dbReference type="GO" id="GO:0065003">
    <property type="term" value="P:protein-containing complex assembly"/>
    <property type="evidence" value="ECO:0000314"/>
    <property type="project" value="TAIR"/>
</dbReference>
<dbReference type="CDD" id="cd00009">
    <property type="entry name" value="AAA"/>
    <property type="match status" value="1"/>
</dbReference>
<dbReference type="CDD" id="cd19499">
    <property type="entry name" value="RecA-like_ClpB_Hsp104-like"/>
    <property type="match status" value="1"/>
</dbReference>
<dbReference type="FunFam" id="1.10.1780.10:FF:000004">
    <property type="entry name" value="ATP-dependent Clp protease ATP-binding subunit ClpC"/>
    <property type="match status" value="1"/>
</dbReference>
<dbReference type="FunFam" id="3.40.50.300:FF:000025">
    <property type="entry name" value="ATP-dependent Clp protease subunit"/>
    <property type="match status" value="1"/>
</dbReference>
<dbReference type="Gene3D" id="1.10.8.60">
    <property type="match status" value="2"/>
</dbReference>
<dbReference type="Gene3D" id="1.10.1780.10">
    <property type="entry name" value="Clp, N-terminal domain"/>
    <property type="match status" value="1"/>
</dbReference>
<dbReference type="Gene3D" id="3.40.50.300">
    <property type="entry name" value="P-loop containing nucleotide triphosphate hydrolases"/>
    <property type="match status" value="2"/>
</dbReference>
<dbReference type="Gene3D" id="4.10.860.10">
    <property type="entry name" value="UVR domain"/>
    <property type="match status" value="1"/>
</dbReference>
<dbReference type="InterPro" id="IPR003593">
    <property type="entry name" value="AAA+_ATPase"/>
</dbReference>
<dbReference type="InterPro" id="IPR003959">
    <property type="entry name" value="ATPase_AAA_core"/>
</dbReference>
<dbReference type="InterPro" id="IPR019489">
    <property type="entry name" value="Clp_ATPase_C"/>
</dbReference>
<dbReference type="InterPro" id="IPR036628">
    <property type="entry name" value="Clp_N_dom_sf"/>
</dbReference>
<dbReference type="InterPro" id="IPR004176">
    <property type="entry name" value="Clp_R_dom"/>
</dbReference>
<dbReference type="InterPro" id="IPR001270">
    <property type="entry name" value="ClpA/B"/>
</dbReference>
<dbReference type="InterPro" id="IPR018368">
    <property type="entry name" value="ClpA/B_CS1"/>
</dbReference>
<dbReference type="InterPro" id="IPR028299">
    <property type="entry name" value="ClpA/B_CS2"/>
</dbReference>
<dbReference type="InterPro" id="IPR041546">
    <property type="entry name" value="ClpA/ClpB_AAA_lid"/>
</dbReference>
<dbReference type="InterPro" id="IPR050130">
    <property type="entry name" value="ClpA_ClpB"/>
</dbReference>
<dbReference type="InterPro" id="IPR027417">
    <property type="entry name" value="P-loop_NTPase"/>
</dbReference>
<dbReference type="PANTHER" id="PTHR11638">
    <property type="entry name" value="ATP-DEPENDENT CLP PROTEASE"/>
    <property type="match status" value="1"/>
</dbReference>
<dbReference type="PANTHER" id="PTHR11638:SF185">
    <property type="entry name" value="ATP-DEPENDENT CLP PROTEASE ATP-BINDING SUBUNIT"/>
    <property type="match status" value="1"/>
</dbReference>
<dbReference type="Pfam" id="PF00004">
    <property type="entry name" value="AAA"/>
    <property type="match status" value="1"/>
</dbReference>
<dbReference type="Pfam" id="PF07724">
    <property type="entry name" value="AAA_2"/>
    <property type="match status" value="1"/>
</dbReference>
<dbReference type="Pfam" id="PF17871">
    <property type="entry name" value="AAA_lid_9"/>
    <property type="match status" value="1"/>
</dbReference>
<dbReference type="Pfam" id="PF02861">
    <property type="entry name" value="Clp_N"/>
    <property type="match status" value="2"/>
</dbReference>
<dbReference type="Pfam" id="PF10431">
    <property type="entry name" value="ClpB_D2-small"/>
    <property type="match status" value="1"/>
</dbReference>
<dbReference type="PRINTS" id="PR00300">
    <property type="entry name" value="CLPPROTEASEA"/>
</dbReference>
<dbReference type="SMART" id="SM00382">
    <property type="entry name" value="AAA"/>
    <property type="match status" value="2"/>
</dbReference>
<dbReference type="SMART" id="SM01086">
    <property type="entry name" value="ClpB_D2-small"/>
    <property type="match status" value="1"/>
</dbReference>
<dbReference type="SUPFAM" id="SSF81923">
    <property type="entry name" value="Double Clp-N motif"/>
    <property type="match status" value="1"/>
</dbReference>
<dbReference type="SUPFAM" id="SSF52540">
    <property type="entry name" value="P-loop containing nucleoside triphosphate hydrolases"/>
    <property type="match status" value="2"/>
</dbReference>
<dbReference type="PROSITE" id="PS51903">
    <property type="entry name" value="CLP_R"/>
    <property type="match status" value="1"/>
</dbReference>
<dbReference type="PROSITE" id="PS00870">
    <property type="entry name" value="CLPAB_1"/>
    <property type="match status" value="1"/>
</dbReference>
<dbReference type="PROSITE" id="PS00871">
    <property type="entry name" value="CLPAB_2"/>
    <property type="match status" value="1"/>
</dbReference>
<reference key="1">
    <citation type="journal article" date="1993" name="Biochem. Biophys. Res. Commun.">
        <title>Characterization of cDNA for a dehydration-inducible gene that encodes a CLP A, B-like protein in Arabidopsis thaliana L.</title>
        <authorList>
            <person name="Kiyosue T."/>
            <person name="Yamaguchi-Shinozaki K."/>
            <person name="Shinozaki K."/>
        </authorList>
    </citation>
    <scope>NUCLEOTIDE SEQUENCE [MRNA]</scope>
    <source>
        <strain>cv. Columbia</strain>
    </source>
</reference>
<reference key="2">
    <citation type="journal article" date="2000" name="DNA Res.">
        <title>Structural analysis of Arabidopsis thaliana chromosome 5. X. Sequence features of the regions of 3,076,755 bp covered by sixty P1 and TAC clones.</title>
        <authorList>
            <person name="Sato S."/>
            <person name="Nakamura Y."/>
            <person name="Kaneko T."/>
            <person name="Katoh T."/>
            <person name="Asamizu E."/>
            <person name="Kotani H."/>
            <person name="Tabata S."/>
        </authorList>
    </citation>
    <scope>NUCLEOTIDE SEQUENCE [LARGE SCALE GENOMIC DNA]</scope>
    <source>
        <strain>cv. Columbia</strain>
    </source>
</reference>
<reference key="3">
    <citation type="journal article" date="1999" name="DNA Res.">
        <title>Structural analysis of Arabidopsis thaliana chromosome 5. IX. Sequence features of the regions of 1,011,550 bp covered by seventeen P1 and TAC clones.</title>
        <authorList>
            <person name="Kaneko T."/>
            <person name="Katoh T."/>
            <person name="Sato S."/>
            <person name="Nakamura Y."/>
            <person name="Asamizu E."/>
            <person name="Kotani H."/>
            <person name="Miyajima N."/>
            <person name="Tabata S."/>
        </authorList>
    </citation>
    <scope>NUCLEOTIDE SEQUENCE [LARGE SCALE GENOMIC DNA]</scope>
    <source>
        <strain>cv. Columbia</strain>
    </source>
</reference>
<reference key="4">
    <citation type="journal article" date="2017" name="Plant J.">
        <title>Araport11: a complete reannotation of the Arabidopsis thaliana reference genome.</title>
        <authorList>
            <person name="Cheng C.Y."/>
            <person name="Krishnakumar V."/>
            <person name="Chan A.P."/>
            <person name="Thibaud-Nissen F."/>
            <person name="Schobel S."/>
            <person name="Town C.D."/>
        </authorList>
    </citation>
    <scope>GENOME REANNOTATION</scope>
    <source>
        <strain>cv. Columbia</strain>
    </source>
</reference>
<reference key="5">
    <citation type="journal article" date="2003" name="Science">
        <title>Empirical analysis of transcriptional activity in the Arabidopsis genome.</title>
        <authorList>
            <person name="Yamada K."/>
            <person name="Lim J."/>
            <person name="Dale J.M."/>
            <person name="Chen H."/>
            <person name="Shinn P."/>
            <person name="Palm C.J."/>
            <person name="Southwick A.M."/>
            <person name="Wu H.C."/>
            <person name="Kim C.J."/>
            <person name="Nguyen M."/>
            <person name="Pham P.K."/>
            <person name="Cheuk R.F."/>
            <person name="Karlin-Newmann G."/>
            <person name="Liu S.X."/>
            <person name="Lam B."/>
            <person name="Sakano H."/>
            <person name="Wu T."/>
            <person name="Yu G."/>
            <person name="Miranda M."/>
            <person name="Quach H.L."/>
            <person name="Tripp M."/>
            <person name="Chang C.H."/>
            <person name="Lee J.M."/>
            <person name="Toriumi M.J."/>
            <person name="Chan M.M."/>
            <person name="Tang C.C."/>
            <person name="Onodera C.S."/>
            <person name="Deng J.M."/>
            <person name="Akiyama K."/>
            <person name="Ansari Y."/>
            <person name="Arakawa T."/>
            <person name="Banh J."/>
            <person name="Banno F."/>
            <person name="Bowser L."/>
            <person name="Brooks S.Y."/>
            <person name="Carninci P."/>
            <person name="Chao Q."/>
            <person name="Choy N."/>
            <person name="Enju A."/>
            <person name="Goldsmith A.D."/>
            <person name="Gurjal M."/>
            <person name="Hansen N.F."/>
            <person name="Hayashizaki Y."/>
            <person name="Johnson-Hopson C."/>
            <person name="Hsuan V.W."/>
            <person name="Iida K."/>
            <person name="Karnes M."/>
            <person name="Khan S."/>
            <person name="Koesema E."/>
            <person name="Ishida J."/>
            <person name="Jiang P.X."/>
            <person name="Jones T."/>
            <person name="Kawai J."/>
            <person name="Kamiya A."/>
            <person name="Meyers C."/>
            <person name="Nakajima M."/>
            <person name="Narusaka M."/>
            <person name="Seki M."/>
            <person name="Sakurai T."/>
            <person name="Satou M."/>
            <person name="Tamse R."/>
            <person name="Vaysberg M."/>
            <person name="Wallender E.K."/>
            <person name="Wong C."/>
            <person name="Yamamura Y."/>
            <person name="Yuan S."/>
            <person name="Shinozaki K."/>
            <person name="Davis R.W."/>
            <person name="Theologis A."/>
            <person name="Ecker J.R."/>
        </authorList>
    </citation>
    <scope>NUCLEOTIDE SEQUENCE [LARGE SCALE MRNA]</scope>
    <source>
        <strain>cv. Columbia</strain>
    </source>
</reference>
<reference key="6">
    <citation type="journal article" date="1997" name="Plant J.">
        <title>A nuclear gene, erd1, encoding a chloroplast-targeted Clp protease regulatory subunit homolog is not only induced by water stress but also developmentally up-regulated during senescence in Arabidopsis thaliana.</title>
        <authorList>
            <person name="Nakashima K."/>
            <person name="Kiyosue T."/>
            <person name="Yamaguchi-Shinozaki K."/>
            <person name="Shinozaki K."/>
        </authorList>
    </citation>
    <scope>SUBCELLULAR LOCATION</scope>
    <scope>INDUCTION</scope>
</reference>
<reference key="7">
    <citation type="journal article" date="1999" name="Plant Cell Physiol.">
        <title>Identification of clp genes expressed in senescing Arabidopsis leaves.</title>
        <authorList>
            <person name="Nakabayashi K."/>
            <person name="Ito M."/>
            <person name="Kiyosue T."/>
            <person name="Shinozaki K."/>
            <person name="Watanabe A."/>
        </authorList>
    </citation>
    <scope>SUBCELLULAR LOCATION</scope>
    <scope>INDUCTION BY SENESCENCE</scope>
    <source>
        <strain>cv. Columbia</strain>
    </source>
</reference>
<reference key="8">
    <citation type="journal article" date="1999" name="Plant Physiol.">
        <title>Senescence-associated gene expression during ozone-induced leaf senescence in Arabidopsis.</title>
        <authorList>
            <person name="Miller J.D."/>
            <person name="Arteca R.N."/>
            <person name="Pell E.J."/>
        </authorList>
    </citation>
    <scope>INDUCTION BY OZONE</scope>
</reference>
<reference key="9">
    <citation type="journal article" date="1999" name="Plant Physiol.">
        <title>Chloroplast-targeted ERD1 protein declines but its mRNA increases during senescence in Arabidopsis.</title>
        <authorList>
            <person name="Weaver L.M."/>
            <person name="Froehlich J.E."/>
            <person name="Amasino R.M."/>
        </authorList>
    </citation>
    <scope>SUBCELLULAR LOCATION</scope>
    <scope>INDUCTION</scope>
</reference>
<reference key="10">
    <citation type="journal article" date="2001" name="Plant Physiol.">
        <title>Chloroplast and mitochondrial proteases in Arabidopsis. A proposed nomenclature.</title>
        <authorList>
            <person name="Adam Z."/>
            <person name="Adamska I."/>
            <person name="Nakabayashi K."/>
            <person name="Ostersetzer O."/>
            <person name="Haussuhl K."/>
            <person name="Manuell A."/>
            <person name="Zheng B."/>
            <person name="Vallon O."/>
            <person name="Rodermel S.R."/>
            <person name="Shinozaki K."/>
            <person name="Clarke A.K."/>
        </authorList>
    </citation>
    <scope>GENE FAMILY</scope>
    <scope>NOMENCLATURE</scope>
</reference>
<reference key="11">
    <citation type="journal article" date="2002" name="Physiol. Plantarum">
        <title>Characterization of chloroplast Clp proteins in Arabidopsis: localization, tissue specificity and stress responses.</title>
        <authorList>
            <person name="Zheng B."/>
            <person name="Halperin T."/>
            <person name="Hruskova-Heidingsfeldova O."/>
            <person name="Adam Z."/>
            <person name="Clarke A.K."/>
        </authorList>
    </citation>
    <scope>SUBCELLULAR LOCATION</scope>
    <scope>TISSUE SPECIFICITY</scope>
    <scope>INDUCTION</scope>
</reference>
<reference key="12">
    <citation type="journal article" date="2005" name="Physiol. Plantarum">
        <title>The ATP-dependent Clp protease in chloroplasts of higher plants.</title>
        <authorList>
            <person name="Clarke A.K."/>
            <person name="MacDonald T.M."/>
            <person name="Sjoegren L.L."/>
        </authorList>
    </citation>
    <scope>NOMENCLATURE</scope>
    <scope>DISRUPTION PHENOTYPE</scope>
</reference>
<reference key="13">
    <citation type="journal article" date="2007" name="Plant J.">
        <title>The Arabidopsis ClpB/Hsp100 family of proteins: chaperones for stress and chloroplast development.</title>
        <authorList>
            <person name="Lee U."/>
            <person name="Rioflorido I."/>
            <person name="Hong S.W."/>
            <person name="Larkindale J."/>
            <person name="Waters E.R."/>
            <person name="Vierling E."/>
        </authorList>
    </citation>
    <scope>INDUCTION</scope>
</reference>
<reference key="14">
    <citation type="journal article" date="2011" name="J. Biol. Chem.">
        <title>Insights into the Clp/HSP100 chaperone system from chloroplasts of Arabidopsis thaliana.</title>
        <authorList>
            <person name="Rosano G.L."/>
            <person name="Bruch E.M."/>
            <person name="Ceccarelli E.A."/>
        </authorList>
    </citation>
    <scope>FUNCTION</scope>
    <scope>CATALYTIC ACTIVITY</scope>
    <scope>BIOPHYSICOCHEMICAL PROPERTIES</scope>
    <scope>COFACTOR</scope>
    <scope>SUBUNIT</scope>
    <scope>SUBCELLULAR LOCATION</scope>
</reference>
<reference key="15">
    <citation type="journal article" date="2012" name="BMC Plant Biol.">
        <title>Chloroplastic Hsp100 chaperones ClpC2 and ClpD interact in vitro with a transit peptide only when it is located at the N-terminus of a protein.</title>
        <authorList>
            <person name="Bruch E.M."/>
            <person name="Rosano G.L."/>
            <person name="Ceccarelli E.A."/>
        </authorList>
    </citation>
    <scope>FUNCTION</scope>
</reference>
<reference key="16">
    <citation type="journal article" date="2012" name="Physiol. Plantarum">
        <title>The chloroplast ATP-dependent Clp protease in vascular plants - new dimensions and future challenges.</title>
        <authorList>
            <person name="Clarke A.K."/>
        </authorList>
    </citation>
    <scope>REVIEW</scope>
</reference>
<reference key="17">
    <citation type="journal article" date="2014" name="BMC Plant Biol.">
        <title>Characterization of the accessory protein ClpT1 from Arabidopsis thaliana: oligomerization status and interaction with Hsp100 chaperones.</title>
        <authorList>
            <person name="Colombo C.V."/>
            <person name="Ceccarelli E.A."/>
            <person name="Rosano G.L."/>
        </authorList>
    </citation>
    <scope>INTERACTION WITH CLPT1</scope>
    <scope>FUNCTION</scope>
</reference>
<comment type="function">
    <text evidence="10 11 12">Molecular chaperone that interact with a ClpP-like protease involved in degradation of denatured proteins in the chloroplast (PubMed:21737456). The ATPase activity of CLPD is stimulated by CLPT1 (PubMed:25149061). Has no ADPase activity (PubMed:21737456). Interacts with transit peptides with a positional preference (PubMed:21737456, PubMed:22545953). Localization of the signal sequence at the N-terminal end of a protein seems mandatory for interaction to take place (PubMed:22545953).</text>
</comment>
<comment type="catalytic activity">
    <reaction evidence="10">
        <text>ATP + H2O = ADP + phosphate + H(+)</text>
        <dbReference type="Rhea" id="RHEA:13065"/>
        <dbReference type="ChEBI" id="CHEBI:15377"/>
        <dbReference type="ChEBI" id="CHEBI:15378"/>
        <dbReference type="ChEBI" id="CHEBI:30616"/>
        <dbReference type="ChEBI" id="CHEBI:43474"/>
        <dbReference type="ChEBI" id="CHEBI:456216"/>
    </reaction>
</comment>
<comment type="cofactor">
    <cofactor evidence="10">
        <name>Mg(2+)</name>
        <dbReference type="ChEBI" id="CHEBI:18420"/>
    </cofactor>
</comment>
<comment type="biophysicochemical properties">
    <kinetics>
        <KM evidence="10">19.8 mM for ATP</KM>
        <Vmax evidence="10">0.19 nmol/min/ug enzyme</Vmax>
    </kinetics>
    <phDependence>
        <text evidence="10">Optimum pH is 7.5.</text>
    </phDependence>
    <temperatureDependence>
        <text evidence="10">Optimum temperature is 45 degrees Celsius.</text>
    </temperatureDependence>
</comment>
<comment type="subunit">
    <text evidence="10 12">Homodimer and homohexamer (PubMed:21737456). Hexamerization upon addition of ATP (PubMed:21737456). Interacts with CLPT1 (PubMed:25149061). Stably associated with the import machinery (PubMed:21737456).</text>
</comment>
<comment type="subcellular location">
    <subcellularLocation>
        <location evidence="5 6 8 10 13">Plastid</location>
        <location evidence="5 6 8 10 13">Chloroplast stroma</location>
    </subcellularLocation>
</comment>
<comment type="tissue specificity">
    <text evidence="8">Expressed in stems and leaves.</text>
</comment>
<comment type="induction">
    <text evidence="5 6 7 8 9 13">By dehydration and salt stresses. Induced after one hour of dehydration-stress and reaches maximal levels after 10 hours. Induced by cold, ozone, senescence and dark-induced etiolation. Down-regulated by ozone (at protein level). Not induced by heat stress.</text>
</comment>
<comment type="disruption phenotype">
    <text evidence="16">No visible phenotype.</text>
</comment>
<comment type="miscellaneous">
    <text evidence="10">CLPD is consistently found in two distinct forms, the full-length protein and a lower molecular weight form porcessed at the C-terminus. The processed form might be the active form and not the full-length protein.</text>
</comment>
<comment type="similarity">
    <text evidence="17">Belongs to the ClpA/ClpB family. ClpD subfamily.</text>
</comment>
<protein>
    <recommendedName>
        <fullName evidence="15">Chaperone protein ClpD, chloroplastic</fullName>
        <ecNumber evidence="10">3.6.1.-</ecNumber>
    </recommendedName>
    <alternativeName>
        <fullName>ATP-dependent Clp protease ATP-binding subunit ClpD homolog</fullName>
    </alternativeName>
    <alternativeName>
        <fullName>Casein lytic proteinase D</fullName>
    </alternativeName>
    <alternativeName>
        <fullName>ERD1 protein</fullName>
    </alternativeName>
    <alternativeName>
        <fullName evidence="14">Protein EARLY RESPONSIVE TO DEHYDRATION 1</fullName>
    </alternativeName>
    <alternativeName>
        <fullName>Protein SENESCENCE ASSOCIATED GENE 15</fullName>
    </alternativeName>
</protein>
<name>CLPD_ARATH</name>
<organism>
    <name type="scientific">Arabidopsis thaliana</name>
    <name type="common">Mouse-ear cress</name>
    <dbReference type="NCBI Taxonomy" id="3702"/>
    <lineage>
        <taxon>Eukaryota</taxon>
        <taxon>Viridiplantae</taxon>
        <taxon>Streptophyta</taxon>
        <taxon>Embryophyta</taxon>
        <taxon>Tracheophyta</taxon>
        <taxon>Spermatophyta</taxon>
        <taxon>Magnoliopsida</taxon>
        <taxon>eudicotyledons</taxon>
        <taxon>Gunneridae</taxon>
        <taxon>Pentapetalae</taxon>
        <taxon>rosids</taxon>
        <taxon>malvids</taxon>
        <taxon>Brassicales</taxon>
        <taxon>Brassicaceae</taxon>
        <taxon>Camelineae</taxon>
        <taxon>Arabidopsis</taxon>
    </lineage>
</organism>
<gene>
    <name evidence="15" type="primary">CLPD</name>
    <name evidence="14" type="synonym">ERD1</name>
    <name type="synonym">SAG15</name>
    <name evidence="18" type="ordered locus">At5g51070</name>
    <name evidence="19" type="ORF">K3K7.27</name>
</gene>